<comment type="function">
    <text evidence="1">Oligomeric Apaf-1 mediates the cytochrome c-dependent autocatalytic activation of pro-caspase-9 (Apaf-3), leading to the activation of caspase-3 and apoptosis. This activation requires ATP (By similarity).</text>
</comment>
<comment type="subunit">
    <text evidence="1">Monomer. Oligomerizes upon binding of cytochrome c and dATP (By similarity).</text>
</comment>
<comment type="subcellular location">
    <subcellularLocation>
        <location evidence="1">Cytoplasm</location>
    </subcellularLocation>
</comment>
<sequence>MEERARSRLLRSKATLEQDIKASYLMDHMISDGVLTNDEEAKVLSKATRKEQAVALLETLLRKDNRAYISFYNALIRESYGDLASLLHSDLPLLSPEGEKSFADGVSPSVQAILSVGGVPQRPVVFVSRPPLLNLIREMLYQLRDTPGWVTVFGMAGSGKSVMAAEVVRDRSLIKECFPDGVHWLSVGQCERADLLVRMQSLCFRLEQCQSSDTSQRPPSTVEEAKERLRFLMLRRFPRSLLILDDVWDSSSLRSFDIQCRVLLTTRNRALTDSVSGVRYEVPVENGLDEEKALEILALYVNGKMHKLPEQARSIVSECKGSPLVVSLIGALLREFPDRWSYYLRQLQQKQFKRIRKSSSYDYEALDQAMDASLQVLEAEHQELYRDLSVMQKDIKVPAKVLSVLWGLELEEVEDVLQEFVNKSLLFRDCNQRPYRYYLHDLQLDFLAEQNRDQIAELHKKMVRQYQRFYSKRPPDSADKDSLYWYQFIPYHMAKAGLSKELYSLMFSLDWVKEKARIMGSAHLINDYVEYGEILDKENSEVRVQFQEFLSLNGHHLEQRPFPDVVQLALSQPDRSEVYRQALMQAQKRASRGQIYLNWVNKNIEEGLSRLVMHPHQGAVYYACFSKDGSKIASCGASKALRVFKSTSGEKLLELQAHEEDVLCCAFSPDDRHIATCASDRKVKLWNVERGVLIREFEVEHEEQINHCQFTNTGRRVLLATCSNDKFTNTRLWNPNKKTSQNTMFGHMEPVNHCCFSPNDLYLATSSSDGSLKLFEVSSANEWKSIDVDSFFPESDEEIKAMVKCSTWSADGSQIICAARNTVFVFDVETSDLLLKLKTSRLSTIQFCHACPNSSLLAVALSHYTVELWNFESSKKKAECSGHLSWVHCVQFSPDGSLLLSSSDDQTIRLWETDRVHTSSAVALKRDTDVLSSHSDATIIAPDSSNRLQVLSGSTGAVVLESEELSSRIRCSCISRNAAFVALGSEDGTVQVIEVPSSKASVKLSGHTKTVHHCQFTDDCEILITSSEDSTIRVWKWRTGECMVLQGHMEPVRKFHLLSSSSSPHLFSWSFDGTVKVWDLTRGQMLQDLVCHEGAVLSCDVSSDGRLFATTSANRTAKVWSSASWKMLFLLEGHKDCVRSCRFSWDNKRLATGDDNGEIRLWSMLDGALLKICPRDTKDSMNSYHAGWVTDLHFSPDNRVLVSTAGYIKWWSVESGEALQTFYTMGGNLKKIHVSPDFSTFITVDSIGILYILKRLEGEGT</sequence>
<protein>
    <recommendedName>
        <fullName>Apoptotic protease-activating factor 1</fullName>
        <shortName>APAF-1</shortName>
    </recommendedName>
</protein>
<reference key="1">
    <citation type="journal article" date="2000" name="Cell Death Differ.">
        <title>Genes with homology to mammalian apoptosis regulators identified in zebrafish.</title>
        <authorList>
            <person name="Inohara N."/>
            <person name="Nunez G."/>
        </authorList>
    </citation>
    <scope>NUCLEOTIDE SEQUENCE [MRNA]</scope>
</reference>
<dbReference type="EMBL" id="AF251502">
    <property type="protein sequence ID" value="AAF67189.1"/>
    <property type="molecule type" value="mRNA"/>
</dbReference>
<dbReference type="RefSeq" id="NP_571683.1">
    <property type="nucleotide sequence ID" value="NM_131608.1"/>
</dbReference>
<dbReference type="SMR" id="Q9I9H8"/>
<dbReference type="FunCoup" id="Q9I9H8">
    <property type="interactions" value="1545"/>
</dbReference>
<dbReference type="STRING" id="7955.ENSDARP00000008347"/>
<dbReference type="PaxDb" id="7955-ENSDARP00000105810"/>
<dbReference type="GeneID" id="58131"/>
<dbReference type="KEGG" id="dre:58131"/>
<dbReference type="AGR" id="ZFIN:ZDB-GENE-000616-4"/>
<dbReference type="CTD" id="317"/>
<dbReference type="ZFIN" id="ZDB-GENE-000616-4">
    <property type="gene designation" value="apaf1"/>
</dbReference>
<dbReference type="eggNOG" id="KOG4155">
    <property type="taxonomic scope" value="Eukaryota"/>
</dbReference>
<dbReference type="eggNOG" id="KOG4658">
    <property type="taxonomic scope" value="Eukaryota"/>
</dbReference>
<dbReference type="InParanoid" id="Q9I9H8"/>
<dbReference type="OrthoDB" id="1357022at2759"/>
<dbReference type="PhylomeDB" id="Q9I9H8"/>
<dbReference type="Reactome" id="R-DRE-111458">
    <property type="pathway name" value="Formation of apoptosome"/>
</dbReference>
<dbReference type="Reactome" id="R-DRE-111459">
    <property type="pathway name" value="Activation of caspases through apoptosome-mediated cleavage"/>
</dbReference>
<dbReference type="Reactome" id="R-DRE-6798695">
    <property type="pathway name" value="Neutrophil degranulation"/>
</dbReference>
<dbReference type="Reactome" id="R-DRE-9627069">
    <property type="pathway name" value="Regulation of the apoptosome activity"/>
</dbReference>
<dbReference type="PRO" id="PR:Q9I9H8"/>
<dbReference type="Proteomes" id="UP000000437">
    <property type="component" value="Chromosome 4"/>
</dbReference>
<dbReference type="GO" id="GO:0043293">
    <property type="term" value="C:apoptosome"/>
    <property type="evidence" value="ECO:0007669"/>
    <property type="project" value="InterPro"/>
</dbReference>
<dbReference type="GO" id="GO:0043531">
    <property type="term" value="F:ADP binding"/>
    <property type="evidence" value="ECO:0007669"/>
    <property type="project" value="InterPro"/>
</dbReference>
<dbReference type="GO" id="GO:0005524">
    <property type="term" value="F:ATP binding"/>
    <property type="evidence" value="ECO:0007669"/>
    <property type="project" value="UniProtKB-KW"/>
</dbReference>
<dbReference type="GO" id="GO:0097190">
    <property type="term" value="P:apoptotic signaling pathway"/>
    <property type="evidence" value="ECO:0007669"/>
    <property type="project" value="InterPro"/>
</dbReference>
<dbReference type="GO" id="GO:0042981">
    <property type="term" value="P:regulation of apoptotic process"/>
    <property type="evidence" value="ECO:0007669"/>
    <property type="project" value="InterPro"/>
</dbReference>
<dbReference type="CDD" id="cd00200">
    <property type="entry name" value="WD40"/>
    <property type="match status" value="2"/>
</dbReference>
<dbReference type="FunFam" id="1.10.533.10:FF:000081">
    <property type="entry name" value="Apoptotic protease-activating factor 1"/>
    <property type="match status" value="1"/>
</dbReference>
<dbReference type="FunFam" id="1.10.8.430:FF:000001">
    <property type="entry name" value="Apoptotic protease-activating factor 1"/>
    <property type="match status" value="1"/>
</dbReference>
<dbReference type="FunFam" id="1.25.40.370:FF:000001">
    <property type="entry name" value="Apoptotic protease-activating factor 1"/>
    <property type="match status" value="1"/>
</dbReference>
<dbReference type="FunFam" id="2.130.10.10:FF:000135">
    <property type="entry name" value="Apoptotic protease-activating factor 1"/>
    <property type="match status" value="1"/>
</dbReference>
<dbReference type="FunFam" id="3.40.50.300:FF:000502">
    <property type="entry name" value="Apoptotic protease-activating factor 1"/>
    <property type="match status" value="1"/>
</dbReference>
<dbReference type="Gene3D" id="1.25.40.370">
    <property type="match status" value="1"/>
</dbReference>
<dbReference type="Gene3D" id="1.10.533.10">
    <property type="entry name" value="Death Domain, Fas"/>
    <property type="match status" value="1"/>
</dbReference>
<dbReference type="Gene3D" id="1.10.8.430">
    <property type="entry name" value="Helical domain of apoptotic protease-activating factors"/>
    <property type="match status" value="1"/>
</dbReference>
<dbReference type="Gene3D" id="3.40.50.300">
    <property type="entry name" value="P-loop containing nucleotide triphosphate hydrolases"/>
    <property type="match status" value="1"/>
</dbReference>
<dbReference type="Gene3D" id="1.10.10.10">
    <property type="entry name" value="Winged helix-like DNA-binding domain superfamily/Winged helix DNA-binding domain"/>
    <property type="match status" value="1"/>
</dbReference>
<dbReference type="Gene3D" id="2.130.10.10">
    <property type="entry name" value="YVTN repeat-like/Quinoprotein amine dehydrogenase"/>
    <property type="match status" value="2"/>
</dbReference>
<dbReference type="InterPro" id="IPR017251">
    <property type="entry name" value="Apaf-1"/>
</dbReference>
<dbReference type="InterPro" id="IPR041452">
    <property type="entry name" value="APAF1_C"/>
</dbReference>
<dbReference type="InterPro" id="IPR048975">
    <property type="entry name" value="APAF1_WHD"/>
</dbReference>
<dbReference type="InterPro" id="IPR042197">
    <property type="entry name" value="Apaf_helical"/>
</dbReference>
<dbReference type="InterPro" id="IPR001315">
    <property type="entry name" value="CARD"/>
</dbReference>
<dbReference type="InterPro" id="IPR011029">
    <property type="entry name" value="DEATH-like_dom_sf"/>
</dbReference>
<dbReference type="InterPro" id="IPR020472">
    <property type="entry name" value="G-protein_beta_WD-40_rep"/>
</dbReference>
<dbReference type="InterPro" id="IPR002182">
    <property type="entry name" value="NB-ARC"/>
</dbReference>
<dbReference type="InterPro" id="IPR027417">
    <property type="entry name" value="P-loop_NTPase"/>
</dbReference>
<dbReference type="InterPro" id="IPR015943">
    <property type="entry name" value="WD40/YVTN_repeat-like_dom_sf"/>
</dbReference>
<dbReference type="InterPro" id="IPR019775">
    <property type="entry name" value="WD40_repeat_CS"/>
</dbReference>
<dbReference type="InterPro" id="IPR036322">
    <property type="entry name" value="WD40_repeat_dom_sf"/>
</dbReference>
<dbReference type="InterPro" id="IPR001680">
    <property type="entry name" value="WD40_rpt"/>
</dbReference>
<dbReference type="InterPro" id="IPR036388">
    <property type="entry name" value="WH-like_DNA-bd_sf"/>
</dbReference>
<dbReference type="PANTHER" id="PTHR22845">
    <property type="entry name" value="APOPTOTIC PROTEASE-ACTIVATING FACTOR 1"/>
    <property type="match status" value="1"/>
</dbReference>
<dbReference type="PANTHER" id="PTHR22845:SF5">
    <property type="entry name" value="APOPTOTIC PROTEASE-ACTIVATING FACTOR 1"/>
    <property type="match status" value="1"/>
</dbReference>
<dbReference type="Pfam" id="PF21296">
    <property type="entry name" value="APAF-1-like_WHD"/>
    <property type="match status" value="1"/>
</dbReference>
<dbReference type="Pfam" id="PF17908">
    <property type="entry name" value="APAF1_C"/>
    <property type="match status" value="1"/>
</dbReference>
<dbReference type="Pfam" id="PF00619">
    <property type="entry name" value="CARD"/>
    <property type="match status" value="1"/>
</dbReference>
<dbReference type="Pfam" id="PF00931">
    <property type="entry name" value="NB-ARC"/>
    <property type="match status" value="1"/>
</dbReference>
<dbReference type="Pfam" id="PF00400">
    <property type="entry name" value="WD40"/>
    <property type="match status" value="9"/>
</dbReference>
<dbReference type="PIRSF" id="PIRSF037646">
    <property type="entry name" value="Apop_pept_activating-1"/>
    <property type="match status" value="1"/>
</dbReference>
<dbReference type="PRINTS" id="PR00364">
    <property type="entry name" value="DISEASERSIST"/>
</dbReference>
<dbReference type="PRINTS" id="PR00320">
    <property type="entry name" value="GPROTEINBRPT"/>
</dbReference>
<dbReference type="SMART" id="SM00320">
    <property type="entry name" value="WD40"/>
    <property type="match status" value="14"/>
</dbReference>
<dbReference type="SUPFAM" id="SSF47986">
    <property type="entry name" value="DEATH domain"/>
    <property type="match status" value="1"/>
</dbReference>
<dbReference type="SUPFAM" id="SSF52540">
    <property type="entry name" value="P-loop containing nucleoside triphosphate hydrolases"/>
    <property type="match status" value="1"/>
</dbReference>
<dbReference type="SUPFAM" id="SSF50978">
    <property type="entry name" value="WD40 repeat-like"/>
    <property type="match status" value="2"/>
</dbReference>
<dbReference type="PROSITE" id="PS50209">
    <property type="entry name" value="CARD"/>
    <property type="match status" value="1"/>
</dbReference>
<dbReference type="PROSITE" id="PS00678">
    <property type="entry name" value="WD_REPEATS_1"/>
    <property type="match status" value="2"/>
</dbReference>
<dbReference type="PROSITE" id="PS50082">
    <property type="entry name" value="WD_REPEATS_2"/>
    <property type="match status" value="7"/>
</dbReference>
<dbReference type="PROSITE" id="PS50294">
    <property type="entry name" value="WD_REPEATS_REGION"/>
    <property type="match status" value="1"/>
</dbReference>
<evidence type="ECO:0000250" key="1"/>
<evidence type="ECO:0000255" key="2"/>
<evidence type="ECO:0000255" key="3">
    <source>
        <dbReference type="PROSITE-ProRule" id="PRU00046"/>
    </source>
</evidence>
<proteinExistence type="evidence at transcript level"/>
<keyword id="KW-0053">Apoptosis</keyword>
<keyword id="KW-0067">ATP-binding</keyword>
<keyword id="KW-0963">Cytoplasm</keyword>
<keyword id="KW-0547">Nucleotide-binding</keyword>
<keyword id="KW-1185">Reference proteome</keyword>
<keyword id="KW-0677">Repeat</keyword>
<keyword id="KW-0853">WD repeat</keyword>
<gene>
    <name type="primary">apaf1</name>
</gene>
<accession>Q9I9H8</accession>
<name>APAF_DANRE</name>
<feature type="chain" id="PRO_0000050847" description="Apoptotic protease-activating factor 1">
    <location>
        <begin position="1"/>
        <end position="1261"/>
    </location>
</feature>
<feature type="domain" description="CARD" evidence="3">
    <location>
        <begin position="1"/>
        <end position="90"/>
    </location>
</feature>
<feature type="domain" description="NB-ARC">
    <location>
        <begin position="106"/>
        <end position="417"/>
    </location>
</feature>
<feature type="repeat" description="WD 1">
    <location>
        <begin position="615"/>
        <end position="654"/>
    </location>
</feature>
<feature type="repeat" description="WD 2">
    <location>
        <begin position="657"/>
        <end position="696"/>
    </location>
</feature>
<feature type="repeat" description="WD 3">
    <location>
        <begin position="700"/>
        <end position="743"/>
    </location>
</feature>
<feature type="repeat" description="WD 4">
    <location>
        <begin position="746"/>
        <end position="785"/>
    </location>
</feature>
<feature type="repeat" description="WD 5">
    <location>
        <begin position="798"/>
        <end position="836"/>
    </location>
</feature>
<feature type="repeat" description="WD 6">
    <location>
        <begin position="840"/>
        <end position="879"/>
    </location>
</feature>
<feature type="repeat" description="WD 7">
    <location>
        <begin position="882"/>
        <end position="921"/>
    </location>
</feature>
<feature type="repeat" description="WD 8">
    <location>
        <begin position="964"/>
        <end position="1003"/>
    </location>
</feature>
<feature type="repeat" description="WD 9">
    <location>
        <begin position="1006"/>
        <end position="1045"/>
    </location>
</feature>
<feature type="repeat" description="WD 10">
    <location>
        <begin position="1047"/>
        <end position="1088"/>
    </location>
</feature>
<feature type="repeat" description="WD 11">
    <location>
        <begin position="1091"/>
        <end position="1130"/>
    </location>
</feature>
<feature type="repeat" description="WD 12">
    <location>
        <begin position="1133"/>
        <end position="1172"/>
    </location>
</feature>
<feature type="repeat" description="WD 13">
    <location>
        <begin position="1184"/>
        <end position="1223"/>
    </location>
</feature>
<feature type="binding site" evidence="2">
    <location>
        <begin position="154"/>
        <end position="161"/>
    </location>
    <ligand>
        <name>ATP</name>
        <dbReference type="ChEBI" id="CHEBI:30616"/>
    </ligand>
</feature>
<organism>
    <name type="scientific">Danio rerio</name>
    <name type="common">Zebrafish</name>
    <name type="synonym">Brachydanio rerio</name>
    <dbReference type="NCBI Taxonomy" id="7955"/>
    <lineage>
        <taxon>Eukaryota</taxon>
        <taxon>Metazoa</taxon>
        <taxon>Chordata</taxon>
        <taxon>Craniata</taxon>
        <taxon>Vertebrata</taxon>
        <taxon>Euteleostomi</taxon>
        <taxon>Actinopterygii</taxon>
        <taxon>Neopterygii</taxon>
        <taxon>Teleostei</taxon>
        <taxon>Ostariophysi</taxon>
        <taxon>Cypriniformes</taxon>
        <taxon>Danionidae</taxon>
        <taxon>Danioninae</taxon>
        <taxon>Danio</taxon>
    </lineage>
</organism>